<gene>
    <name type="primary">csn1</name>
</gene>
<protein>
    <recommendedName>
        <fullName>COP9 signalosome complex subunit 1</fullName>
        <shortName>Signalosome subunit 1</shortName>
    </recommendedName>
</protein>
<comment type="function">
    <text evidence="1">Essential component of the COP9 signalosome complex (CSN), a complex involved in various cellular and developmental processes. The CSN complex is an essential regulator of the ubiquitin (Ubl) conjugation pathway by mediating the deneddylation of the cullin subunits of E3 ligase complexes, leading to modify the Ubl ligase activity (By similarity).</text>
</comment>
<comment type="subunit">
    <text evidence="2">Component of the CSN complex, probably composed of cops1, cops2, cops3, cops4, cops5, cops6, cops7, cops8 and cops9.</text>
</comment>
<comment type="subcellular location">
    <subcellularLocation>
        <location evidence="1">Cytoplasm</location>
    </subcellularLocation>
    <subcellularLocation>
        <location evidence="1">Nucleus</location>
    </subcellularLocation>
</comment>
<comment type="similarity">
    <text evidence="5">Belongs to the CSN1 family.</text>
</comment>
<evidence type="ECO:0000250" key="1"/>
<evidence type="ECO:0000250" key="2">
    <source>
        <dbReference type="UniProtKB" id="Q13098"/>
    </source>
</evidence>
<evidence type="ECO:0000255" key="3">
    <source>
        <dbReference type="PROSITE-ProRule" id="PRU01185"/>
    </source>
</evidence>
<evidence type="ECO:0000256" key="4">
    <source>
        <dbReference type="SAM" id="MobiDB-lite"/>
    </source>
</evidence>
<evidence type="ECO:0000305" key="5"/>
<accession>Q6NRT5</accession>
<feature type="chain" id="PRO_0000120962" description="COP9 signalosome complex subunit 1">
    <location>
        <begin position="1"/>
        <end position="487"/>
    </location>
</feature>
<feature type="domain" description="PCI" evidence="3">
    <location>
        <begin position="265"/>
        <end position="427"/>
    </location>
</feature>
<feature type="region of interest" description="Disordered" evidence="4">
    <location>
        <begin position="103"/>
        <end position="123"/>
    </location>
</feature>
<feature type="region of interest" description="Disordered" evidence="4">
    <location>
        <begin position="461"/>
        <end position="487"/>
    </location>
</feature>
<feature type="compositionally biased region" description="Polar residues" evidence="4">
    <location>
        <begin position="472"/>
        <end position="487"/>
    </location>
</feature>
<keyword id="KW-0963">Cytoplasm</keyword>
<keyword id="KW-0539">Nucleus</keyword>
<keyword id="KW-1185">Reference proteome</keyword>
<keyword id="KW-0736">Signalosome</keyword>
<name>CSN1_XENLA</name>
<reference key="1">
    <citation type="submission" date="2004-05" db="EMBL/GenBank/DDBJ databases">
        <authorList>
            <consortium name="NIH - Xenopus Gene Collection (XGC) project"/>
        </authorList>
    </citation>
    <scope>NUCLEOTIDE SEQUENCE [LARGE SCALE MRNA]</scope>
    <source>
        <tissue>Embryo</tissue>
    </source>
</reference>
<dbReference type="EMBL" id="BC070633">
    <property type="protein sequence ID" value="AAH70633.1"/>
    <property type="molecule type" value="mRNA"/>
</dbReference>
<dbReference type="RefSeq" id="NP_001084802.1">
    <property type="nucleotide sequence ID" value="NM_001091333.1"/>
</dbReference>
<dbReference type="SMR" id="Q6NRT5"/>
<dbReference type="DNASU" id="431842"/>
<dbReference type="GeneID" id="431842"/>
<dbReference type="KEGG" id="xla:431842"/>
<dbReference type="AGR" id="Xenbase:XB-GENE-955154"/>
<dbReference type="CTD" id="431842"/>
<dbReference type="Xenbase" id="XB-GENE-955154">
    <property type="gene designation" value="gps1.L"/>
</dbReference>
<dbReference type="OMA" id="IYLQNWA"/>
<dbReference type="OrthoDB" id="422427at2759"/>
<dbReference type="Proteomes" id="UP000186698">
    <property type="component" value="Chromosome 9_10L"/>
</dbReference>
<dbReference type="Bgee" id="431842">
    <property type="expression patterns" value="Expressed in testis and 19 other cell types or tissues"/>
</dbReference>
<dbReference type="GO" id="GO:0008180">
    <property type="term" value="C:COP9 signalosome"/>
    <property type="evidence" value="ECO:0000318"/>
    <property type="project" value="GO_Central"/>
</dbReference>
<dbReference type="GO" id="GO:0005737">
    <property type="term" value="C:cytoplasm"/>
    <property type="evidence" value="ECO:0007669"/>
    <property type="project" value="UniProtKB-SubCell"/>
</dbReference>
<dbReference type="FunFam" id="1.25.40.570:FF:000002">
    <property type="entry name" value="COP9 signalosome complex subunit 1"/>
    <property type="match status" value="1"/>
</dbReference>
<dbReference type="Gene3D" id="1.25.40.570">
    <property type="match status" value="1"/>
</dbReference>
<dbReference type="InterPro" id="IPR048624">
    <property type="entry name" value="CSN1_C"/>
</dbReference>
<dbReference type="InterPro" id="IPR000717">
    <property type="entry name" value="PCI_dom"/>
</dbReference>
<dbReference type="InterPro" id="IPR019585">
    <property type="entry name" value="Rpn7/CSN1"/>
</dbReference>
<dbReference type="InterPro" id="IPR045135">
    <property type="entry name" value="Rpn7_N"/>
</dbReference>
<dbReference type="InterPro" id="IPR036390">
    <property type="entry name" value="WH_DNA-bd_sf"/>
</dbReference>
<dbReference type="PANTHER" id="PTHR14145">
    <property type="entry name" value="26S PROTESOME SUBUNIT 6"/>
    <property type="match status" value="1"/>
</dbReference>
<dbReference type="PANTHER" id="PTHR14145:SF2">
    <property type="entry name" value="COP9 SIGNALOSOME COMPLEX SUBUNIT 1"/>
    <property type="match status" value="1"/>
</dbReference>
<dbReference type="Pfam" id="PF21151">
    <property type="entry name" value="CSN1_C"/>
    <property type="match status" value="1"/>
</dbReference>
<dbReference type="Pfam" id="PF01399">
    <property type="entry name" value="PCI"/>
    <property type="match status" value="1"/>
</dbReference>
<dbReference type="Pfam" id="PF10602">
    <property type="entry name" value="RPN7"/>
    <property type="match status" value="1"/>
</dbReference>
<dbReference type="SMART" id="SM00088">
    <property type="entry name" value="PINT"/>
    <property type="match status" value="1"/>
</dbReference>
<dbReference type="SUPFAM" id="SSF46785">
    <property type="entry name" value="Winged helix' DNA-binding domain"/>
    <property type="match status" value="1"/>
</dbReference>
<dbReference type="PROSITE" id="PS50250">
    <property type="entry name" value="PCI"/>
    <property type="match status" value="1"/>
</dbReference>
<proteinExistence type="evidence at transcript level"/>
<sequence length="487" mass="55272">MPLPVQVFNLQSAVEPMQIDADPQDDQQNMPDVNYVVENPTLDLEQYASSYSGLMRIERLQFIADRCPQLRVEALKMALSFVQRTFNVDVYEDIHRKLAEASREVQNAPDAVPEGSMEPPALDTSWVEATRKKALLKLEKLDTDLKNYKGNSIKESIRRGHDDLGDHYLDCGDLSNALKCYSRARDYCTSAKHVINMCLNVIKVSVYLQNWSHVLSYVSKAESTPEIAEQRGERDSQTQAVLTKLKCAAGLAELAARKYKQAAKCFLLASFDHCDFPELLSPSNVAVYGGLCALATFDRQELQRNVISSSSFKLFLELEPQVRDIIFKFYESKYASCLKMLDEIKDNLLLDMYLAPHVRTLYTQIRNRALIQYFSPYVSADMYKMATAFNTTVSALEDELTQLILEGLINARIDSHSKILYARDVDQRSTTFEKSLQMGREFQRRAKAMILRAAVLRNQIHVKSPPREGSQGELTPANSQSRLSTNM</sequence>
<organism>
    <name type="scientific">Xenopus laevis</name>
    <name type="common">African clawed frog</name>
    <dbReference type="NCBI Taxonomy" id="8355"/>
    <lineage>
        <taxon>Eukaryota</taxon>
        <taxon>Metazoa</taxon>
        <taxon>Chordata</taxon>
        <taxon>Craniata</taxon>
        <taxon>Vertebrata</taxon>
        <taxon>Euteleostomi</taxon>
        <taxon>Amphibia</taxon>
        <taxon>Batrachia</taxon>
        <taxon>Anura</taxon>
        <taxon>Pipoidea</taxon>
        <taxon>Pipidae</taxon>
        <taxon>Xenopodinae</taxon>
        <taxon>Xenopus</taxon>
        <taxon>Xenopus</taxon>
    </lineage>
</organism>